<evidence type="ECO:0000255" key="1"/>
<evidence type="ECO:0000305" key="2"/>
<comment type="subcellular location">
    <subcellularLocation>
        <location evidence="2">Cell membrane</location>
        <topology evidence="2">Multi-pass membrane protein</topology>
    </subcellularLocation>
</comment>
<comment type="similarity">
    <text evidence="2">To M.jannaschii MJ0706 and Synechocystis PCC 6803 slr1478.</text>
</comment>
<sequence>MKIPIILTLMLFSLGFIFGFISINNLSKINDKDLSNYIPNIQFNFPSILTNNLKVIFLMLAGSITFGLSTFINLIFNGFNVGVLIGSISLTNEPLKLITALILPHGIFEISAMLISAVAGFKIPYKVTLYLLDKKEKPLTEEDIKDFLKLSLISIILIVIAAFIEVYITPKIATYLLT</sequence>
<dbReference type="EMBL" id="L77117">
    <property type="protein sequence ID" value="AAB98796.1"/>
    <property type="molecule type" value="Genomic_DNA"/>
</dbReference>
<dbReference type="PIR" id="A64399">
    <property type="entry name" value="A64399"/>
</dbReference>
<dbReference type="RefSeq" id="WP_010870301.1">
    <property type="nucleotide sequence ID" value="NC_000909.1"/>
</dbReference>
<dbReference type="STRING" id="243232.MJ_0793"/>
<dbReference type="PaxDb" id="243232-MJ_0793"/>
<dbReference type="DNASU" id="1451673"/>
<dbReference type="EnsemblBacteria" id="AAB98796">
    <property type="protein sequence ID" value="AAB98796"/>
    <property type="gene ID" value="MJ_0793"/>
</dbReference>
<dbReference type="GeneID" id="1451673"/>
<dbReference type="KEGG" id="mja:MJ_0793"/>
<dbReference type="eggNOG" id="arCOG01996">
    <property type="taxonomic scope" value="Archaea"/>
</dbReference>
<dbReference type="HOGENOM" id="CLU_099320_1_0_2"/>
<dbReference type="InParanoid" id="Q58203"/>
<dbReference type="OrthoDB" id="86288at2157"/>
<dbReference type="PhylomeDB" id="Q58203"/>
<dbReference type="Proteomes" id="UP000000805">
    <property type="component" value="Chromosome"/>
</dbReference>
<dbReference type="GO" id="GO:0005886">
    <property type="term" value="C:plasma membrane"/>
    <property type="evidence" value="ECO:0007669"/>
    <property type="project" value="UniProtKB-SubCell"/>
</dbReference>
<dbReference type="InterPro" id="IPR002798">
    <property type="entry name" value="SpoIIM-like"/>
</dbReference>
<dbReference type="PANTHER" id="PTHR35337">
    <property type="entry name" value="SLR1478 PROTEIN"/>
    <property type="match status" value="1"/>
</dbReference>
<dbReference type="PANTHER" id="PTHR35337:SF1">
    <property type="entry name" value="SLR1478 PROTEIN"/>
    <property type="match status" value="1"/>
</dbReference>
<dbReference type="Pfam" id="PF01944">
    <property type="entry name" value="SpoIIM"/>
    <property type="match status" value="1"/>
</dbReference>
<name>Y793_METJA</name>
<keyword id="KW-1003">Cell membrane</keyword>
<keyword id="KW-0472">Membrane</keyword>
<keyword id="KW-1185">Reference proteome</keyword>
<keyword id="KW-0812">Transmembrane</keyword>
<keyword id="KW-1133">Transmembrane helix</keyword>
<reference key="1">
    <citation type="journal article" date="1996" name="Science">
        <title>Complete genome sequence of the methanogenic archaeon, Methanococcus jannaschii.</title>
        <authorList>
            <person name="Bult C.J."/>
            <person name="White O."/>
            <person name="Olsen G.J."/>
            <person name="Zhou L."/>
            <person name="Fleischmann R.D."/>
            <person name="Sutton G.G."/>
            <person name="Blake J.A."/>
            <person name="FitzGerald L.M."/>
            <person name="Clayton R.A."/>
            <person name="Gocayne J.D."/>
            <person name="Kerlavage A.R."/>
            <person name="Dougherty B.A."/>
            <person name="Tomb J.-F."/>
            <person name="Adams M.D."/>
            <person name="Reich C.I."/>
            <person name="Overbeek R."/>
            <person name="Kirkness E.F."/>
            <person name="Weinstock K.G."/>
            <person name="Merrick J.M."/>
            <person name="Glodek A."/>
            <person name="Scott J.L."/>
            <person name="Geoghagen N.S.M."/>
            <person name="Weidman J.F."/>
            <person name="Fuhrmann J.L."/>
            <person name="Nguyen D."/>
            <person name="Utterback T.R."/>
            <person name="Kelley J.M."/>
            <person name="Peterson J.D."/>
            <person name="Sadow P.W."/>
            <person name="Hanna M.C."/>
            <person name="Cotton M.D."/>
            <person name="Roberts K.M."/>
            <person name="Hurst M.A."/>
            <person name="Kaine B.P."/>
            <person name="Borodovsky M."/>
            <person name="Klenk H.-P."/>
            <person name="Fraser C.M."/>
            <person name="Smith H.O."/>
            <person name="Woese C.R."/>
            <person name="Venter J.C."/>
        </authorList>
    </citation>
    <scope>NUCLEOTIDE SEQUENCE [LARGE SCALE GENOMIC DNA]</scope>
    <source>
        <strain>ATCC 43067 / DSM 2661 / JAL-1 / JCM 10045 / NBRC 100440</strain>
    </source>
</reference>
<protein>
    <recommendedName>
        <fullName>Uncharacterized protein MJ0793</fullName>
    </recommendedName>
</protein>
<gene>
    <name type="ordered locus">MJ0793</name>
</gene>
<accession>Q58203</accession>
<organism>
    <name type="scientific">Methanocaldococcus jannaschii (strain ATCC 43067 / DSM 2661 / JAL-1 / JCM 10045 / NBRC 100440)</name>
    <name type="common">Methanococcus jannaschii</name>
    <dbReference type="NCBI Taxonomy" id="243232"/>
    <lineage>
        <taxon>Archaea</taxon>
        <taxon>Methanobacteriati</taxon>
        <taxon>Methanobacteriota</taxon>
        <taxon>Methanomada group</taxon>
        <taxon>Methanococci</taxon>
        <taxon>Methanococcales</taxon>
        <taxon>Methanocaldococcaceae</taxon>
        <taxon>Methanocaldococcus</taxon>
    </lineage>
</organism>
<feature type="chain" id="PRO_0000107044" description="Uncharacterized protein MJ0793">
    <location>
        <begin position="1"/>
        <end position="178"/>
    </location>
</feature>
<feature type="transmembrane region" description="Helical" evidence="1">
    <location>
        <begin position="3"/>
        <end position="23"/>
    </location>
</feature>
<feature type="transmembrane region" description="Helical" evidence="1">
    <location>
        <begin position="56"/>
        <end position="76"/>
    </location>
</feature>
<feature type="transmembrane region" description="Helical" evidence="1">
    <location>
        <begin position="101"/>
        <end position="121"/>
    </location>
</feature>
<feature type="transmembrane region" description="Helical" evidence="1">
    <location>
        <begin position="150"/>
        <end position="170"/>
    </location>
</feature>
<proteinExistence type="predicted"/>